<evidence type="ECO:0000255" key="1">
    <source>
        <dbReference type="HAMAP-Rule" id="MF_00171"/>
    </source>
</evidence>
<feature type="chain" id="PRO_0000057489" description="tRNA pseudouridine synthase A">
    <location>
        <begin position="1"/>
        <end position="245"/>
    </location>
</feature>
<feature type="active site" description="Nucleophile" evidence="1">
    <location>
        <position position="52"/>
    </location>
</feature>
<feature type="binding site" evidence="1">
    <location>
        <position position="111"/>
    </location>
    <ligand>
        <name>substrate</name>
    </ligand>
</feature>
<sequence length="245" mass="27935">MRYKITVEYNGSNFSGWQKQQHSANSIQEKIENAIFNFSGEKVTLYCGGRTDAGVHALGQVAHFDMEKEFELYRIRNAINYHLKSIPIVVLNAEVVDDAFHARFSAKKRYYEYRIVNRYAPAALETGYVWQVFSPLDVNIMREAAKHLLGKHDLSSFRSKDCQAANPIRTIDDIDIIQNGNHIHIKISAISFLHNQVRIIVGTLVEFGKNRTNPQEMLNILNQCKRSAAGVTAPPFGLYLVKIDY</sequence>
<gene>
    <name evidence="1" type="primary">truA</name>
    <name type="ordered locus">WD_1068</name>
</gene>
<comment type="function">
    <text evidence="1">Formation of pseudouridine at positions 38, 39 and 40 in the anticodon stem and loop of transfer RNAs.</text>
</comment>
<comment type="catalytic activity">
    <reaction evidence="1">
        <text>uridine(38/39/40) in tRNA = pseudouridine(38/39/40) in tRNA</text>
        <dbReference type="Rhea" id="RHEA:22376"/>
        <dbReference type="Rhea" id="RHEA-COMP:10085"/>
        <dbReference type="Rhea" id="RHEA-COMP:10087"/>
        <dbReference type="ChEBI" id="CHEBI:65314"/>
        <dbReference type="ChEBI" id="CHEBI:65315"/>
        <dbReference type="EC" id="5.4.99.12"/>
    </reaction>
</comment>
<comment type="subunit">
    <text evidence="1">Homodimer.</text>
</comment>
<comment type="similarity">
    <text evidence="1">Belongs to the tRNA pseudouridine synthase TruA family.</text>
</comment>
<proteinExistence type="inferred from homology"/>
<accession>Q73G93</accession>
<dbReference type="EC" id="5.4.99.12" evidence="1"/>
<dbReference type="EMBL" id="AE017196">
    <property type="protein sequence ID" value="AAS14723.1"/>
    <property type="molecule type" value="Genomic_DNA"/>
</dbReference>
<dbReference type="RefSeq" id="WP_010963021.1">
    <property type="nucleotide sequence ID" value="NZ_OX384529.1"/>
</dbReference>
<dbReference type="SMR" id="Q73G93"/>
<dbReference type="EnsemblBacteria" id="AAS14723">
    <property type="protein sequence ID" value="AAS14723"/>
    <property type="gene ID" value="WD_1068"/>
</dbReference>
<dbReference type="GeneID" id="70036544"/>
<dbReference type="KEGG" id="wol:WD_1068"/>
<dbReference type="eggNOG" id="COG0101">
    <property type="taxonomic scope" value="Bacteria"/>
</dbReference>
<dbReference type="Proteomes" id="UP000008215">
    <property type="component" value="Chromosome"/>
</dbReference>
<dbReference type="GO" id="GO:0003723">
    <property type="term" value="F:RNA binding"/>
    <property type="evidence" value="ECO:0007669"/>
    <property type="project" value="InterPro"/>
</dbReference>
<dbReference type="GO" id="GO:0160147">
    <property type="term" value="F:tRNA pseudouridine(38-40) synthase activity"/>
    <property type="evidence" value="ECO:0007669"/>
    <property type="project" value="UniProtKB-EC"/>
</dbReference>
<dbReference type="GO" id="GO:0031119">
    <property type="term" value="P:tRNA pseudouridine synthesis"/>
    <property type="evidence" value="ECO:0007669"/>
    <property type="project" value="UniProtKB-UniRule"/>
</dbReference>
<dbReference type="CDD" id="cd02570">
    <property type="entry name" value="PseudoU_synth_EcTruA"/>
    <property type="match status" value="1"/>
</dbReference>
<dbReference type="FunFam" id="3.30.70.580:FF:000001">
    <property type="entry name" value="tRNA pseudouridine synthase A"/>
    <property type="match status" value="1"/>
</dbReference>
<dbReference type="Gene3D" id="3.30.70.660">
    <property type="entry name" value="Pseudouridine synthase I, catalytic domain, C-terminal subdomain"/>
    <property type="match status" value="1"/>
</dbReference>
<dbReference type="Gene3D" id="3.30.70.580">
    <property type="entry name" value="Pseudouridine synthase I, catalytic domain, N-terminal subdomain"/>
    <property type="match status" value="1"/>
</dbReference>
<dbReference type="HAMAP" id="MF_00171">
    <property type="entry name" value="TruA"/>
    <property type="match status" value="1"/>
</dbReference>
<dbReference type="InterPro" id="IPR020103">
    <property type="entry name" value="PsdUridine_synth_cat_dom_sf"/>
</dbReference>
<dbReference type="InterPro" id="IPR001406">
    <property type="entry name" value="PsdUridine_synth_TruA"/>
</dbReference>
<dbReference type="InterPro" id="IPR020097">
    <property type="entry name" value="PsdUridine_synth_TruA_a/b_dom"/>
</dbReference>
<dbReference type="InterPro" id="IPR020095">
    <property type="entry name" value="PsdUridine_synth_TruA_C"/>
</dbReference>
<dbReference type="InterPro" id="IPR020094">
    <property type="entry name" value="TruA/RsuA/RluB/E/F_N"/>
</dbReference>
<dbReference type="NCBIfam" id="TIGR00071">
    <property type="entry name" value="hisT_truA"/>
    <property type="match status" value="1"/>
</dbReference>
<dbReference type="PANTHER" id="PTHR11142">
    <property type="entry name" value="PSEUDOURIDYLATE SYNTHASE"/>
    <property type="match status" value="1"/>
</dbReference>
<dbReference type="PANTHER" id="PTHR11142:SF0">
    <property type="entry name" value="TRNA PSEUDOURIDINE SYNTHASE-LIKE 1"/>
    <property type="match status" value="1"/>
</dbReference>
<dbReference type="Pfam" id="PF01416">
    <property type="entry name" value="PseudoU_synth_1"/>
    <property type="match status" value="2"/>
</dbReference>
<dbReference type="PIRSF" id="PIRSF001430">
    <property type="entry name" value="tRNA_psdUrid_synth"/>
    <property type="match status" value="1"/>
</dbReference>
<dbReference type="SUPFAM" id="SSF55120">
    <property type="entry name" value="Pseudouridine synthase"/>
    <property type="match status" value="1"/>
</dbReference>
<protein>
    <recommendedName>
        <fullName evidence="1">tRNA pseudouridine synthase A</fullName>
        <ecNumber evidence="1">5.4.99.12</ecNumber>
    </recommendedName>
    <alternativeName>
        <fullName evidence="1">tRNA pseudouridine(38-40) synthase</fullName>
    </alternativeName>
    <alternativeName>
        <fullName evidence="1">tRNA pseudouridylate synthase I</fullName>
    </alternativeName>
    <alternativeName>
        <fullName evidence="1">tRNA-uridine isomerase I</fullName>
    </alternativeName>
</protein>
<name>TRUA_WOLPM</name>
<organism>
    <name type="scientific">Wolbachia pipientis wMel</name>
    <dbReference type="NCBI Taxonomy" id="163164"/>
    <lineage>
        <taxon>Bacteria</taxon>
        <taxon>Pseudomonadati</taxon>
        <taxon>Pseudomonadota</taxon>
        <taxon>Alphaproteobacteria</taxon>
        <taxon>Rickettsiales</taxon>
        <taxon>Anaplasmataceae</taxon>
        <taxon>Wolbachieae</taxon>
        <taxon>Wolbachia</taxon>
    </lineage>
</organism>
<reference key="1">
    <citation type="journal article" date="2004" name="PLoS Biol.">
        <title>Phylogenomics of the reproductive parasite Wolbachia pipientis wMel: a streamlined genome overrun by mobile genetic elements.</title>
        <authorList>
            <person name="Wu M."/>
            <person name="Sun L.V."/>
            <person name="Vamathevan J.J."/>
            <person name="Riegler M."/>
            <person name="DeBoy R.T."/>
            <person name="Brownlie J.C."/>
            <person name="McGraw E.A."/>
            <person name="Martin W."/>
            <person name="Esser C."/>
            <person name="Ahmadinejad N."/>
            <person name="Wiegand C."/>
            <person name="Madupu R."/>
            <person name="Beanan M.J."/>
            <person name="Brinkac L.M."/>
            <person name="Daugherty S.C."/>
            <person name="Durkin A.S."/>
            <person name="Kolonay J.F."/>
            <person name="Nelson W.C."/>
            <person name="Mohamoud Y."/>
            <person name="Lee P."/>
            <person name="Berry K.J."/>
            <person name="Young M.B."/>
            <person name="Utterback T.R."/>
            <person name="Weidman J.F."/>
            <person name="Nierman W.C."/>
            <person name="Paulsen I.T."/>
            <person name="Nelson K.E."/>
            <person name="Tettelin H."/>
            <person name="O'Neill S.L."/>
            <person name="Eisen J.A."/>
        </authorList>
    </citation>
    <scope>NUCLEOTIDE SEQUENCE [LARGE SCALE GENOMIC DNA]</scope>
</reference>
<keyword id="KW-0413">Isomerase</keyword>
<keyword id="KW-0819">tRNA processing</keyword>